<gene>
    <name evidence="1" type="primary">gmk</name>
    <name type="ordered locus">Ecaj_0681</name>
</gene>
<proteinExistence type="inferred from homology"/>
<comment type="function">
    <text evidence="1">Essential for recycling GMP and indirectly, cGMP.</text>
</comment>
<comment type="catalytic activity">
    <reaction evidence="1">
        <text>GMP + ATP = GDP + ADP</text>
        <dbReference type="Rhea" id="RHEA:20780"/>
        <dbReference type="ChEBI" id="CHEBI:30616"/>
        <dbReference type="ChEBI" id="CHEBI:58115"/>
        <dbReference type="ChEBI" id="CHEBI:58189"/>
        <dbReference type="ChEBI" id="CHEBI:456216"/>
        <dbReference type="EC" id="2.7.4.8"/>
    </reaction>
</comment>
<comment type="subcellular location">
    <subcellularLocation>
        <location evidence="1">Cytoplasm</location>
    </subcellularLocation>
</comment>
<comment type="similarity">
    <text evidence="1">Belongs to the guanylate kinase family.</text>
</comment>
<name>KGUA_EHRCJ</name>
<reference key="1">
    <citation type="journal article" date="2006" name="J. Bacteriol.">
        <title>The genome of the obligately intracellular bacterium Ehrlichia canis reveals themes of complex membrane structure and immune evasion strategies.</title>
        <authorList>
            <person name="Mavromatis K."/>
            <person name="Doyle C.K."/>
            <person name="Lykidis A."/>
            <person name="Ivanova N."/>
            <person name="Francino M.P."/>
            <person name="Chain P."/>
            <person name="Shin M."/>
            <person name="Malfatti S."/>
            <person name="Larimer F."/>
            <person name="Copeland A."/>
            <person name="Detter J.C."/>
            <person name="Land M."/>
            <person name="Richardson P.M."/>
            <person name="Yu X.J."/>
            <person name="Walker D.H."/>
            <person name="McBride J.W."/>
            <person name="Kyrpides N.C."/>
        </authorList>
    </citation>
    <scope>NUCLEOTIDE SEQUENCE [LARGE SCALE GENOMIC DNA]</scope>
    <source>
        <strain>Jake</strain>
    </source>
</reference>
<evidence type="ECO:0000255" key="1">
    <source>
        <dbReference type="HAMAP-Rule" id="MF_00328"/>
    </source>
</evidence>
<protein>
    <recommendedName>
        <fullName evidence="1">Guanylate kinase</fullName>
        <ecNumber evidence="1">2.7.4.8</ecNumber>
    </recommendedName>
    <alternativeName>
        <fullName evidence="1">GMP kinase</fullName>
    </alternativeName>
</protein>
<accession>Q3YRE2</accession>
<organism>
    <name type="scientific">Ehrlichia canis (strain Jake)</name>
    <dbReference type="NCBI Taxonomy" id="269484"/>
    <lineage>
        <taxon>Bacteria</taxon>
        <taxon>Pseudomonadati</taxon>
        <taxon>Pseudomonadota</taxon>
        <taxon>Alphaproteobacteria</taxon>
        <taxon>Rickettsiales</taxon>
        <taxon>Anaplasmataceae</taxon>
        <taxon>Ehrlichia</taxon>
    </lineage>
</organism>
<feature type="chain" id="PRO_0000266319" description="Guanylate kinase">
    <location>
        <begin position="1"/>
        <end position="209"/>
    </location>
</feature>
<feature type="domain" description="Guanylate kinase-like" evidence="1">
    <location>
        <begin position="9"/>
        <end position="188"/>
    </location>
</feature>
<feature type="binding site" evidence="1">
    <location>
        <begin position="16"/>
        <end position="23"/>
    </location>
    <ligand>
        <name>ATP</name>
        <dbReference type="ChEBI" id="CHEBI:30616"/>
    </ligand>
</feature>
<sequence length="209" mass="24250">MNDNLKSSGIMLVISSPSGGGKTTISHLLIDELQNDLVRSVSVTTREPRDGEVNGKDYFFVTEHEFINLCNTDQMLEYAKVFGNYYGIPRKFVMDNITTGVSVLFSIDWQGAFKLIDIMREHVVSVFILPPSMEELRRRLYNRSGKSDIVKKRLGEAAFEIDHCYRYDYVIVNHDVEESVHQIKCIFTSERLRVQRRILLKQFIDNYIK</sequence>
<dbReference type="EC" id="2.7.4.8" evidence="1"/>
<dbReference type="EMBL" id="CP000107">
    <property type="protein sequence ID" value="AAZ68713.1"/>
    <property type="molecule type" value="Genomic_DNA"/>
</dbReference>
<dbReference type="RefSeq" id="WP_011304790.1">
    <property type="nucleotide sequence ID" value="NC_007354.1"/>
</dbReference>
<dbReference type="SMR" id="Q3YRE2"/>
<dbReference type="FunCoup" id="Q3YRE2">
    <property type="interactions" value="281"/>
</dbReference>
<dbReference type="STRING" id="269484.Ecaj_0681"/>
<dbReference type="KEGG" id="ecn:Ecaj_0681"/>
<dbReference type="eggNOG" id="COG0194">
    <property type="taxonomic scope" value="Bacteria"/>
</dbReference>
<dbReference type="HOGENOM" id="CLU_001715_1_2_5"/>
<dbReference type="InParanoid" id="Q3YRE2"/>
<dbReference type="Proteomes" id="UP000000435">
    <property type="component" value="Chromosome"/>
</dbReference>
<dbReference type="GO" id="GO:0005829">
    <property type="term" value="C:cytosol"/>
    <property type="evidence" value="ECO:0007669"/>
    <property type="project" value="TreeGrafter"/>
</dbReference>
<dbReference type="GO" id="GO:0005524">
    <property type="term" value="F:ATP binding"/>
    <property type="evidence" value="ECO:0007669"/>
    <property type="project" value="UniProtKB-UniRule"/>
</dbReference>
<dbReference type="GO" id="GO:0004385">
    <property type="term" value="F:guanylate kinase activity"/>
    <property type="evidence" value="ECO:0007669"/>
    <property type="project" value="UniProtKB-UniRule"/>
</dbReference>
<dbReference type="CDD" id="cd00071">
    <property type="entry name" value="GMPK"/>
    <property type="match status" value="1"/>
</dbReference>
<dbReference type="FunFam" id="3.30.63.10:FF:000002">
    <property type="entry name" value="Guanylate kinase 1"/>
    <property type="match status" value="1"/>
</dbReference>
<dbReference type="Gene3D" id="3.30.63.10">
    <property type="entry name" value="Guanylate Kinase phosphate binding domain"/>
    <property type="match status" value="1"/>
</dbReference>
<dbReference type="Gene3D" id="3.40.50.300">
    <property type="entry name" value="P-loop containing nucleotide triphosphate hydrolases"/>
    <property type="match status" value="1"/>
</dbReference>
<dbReference type="HAMAP" id="MF_00328">
    <property type="entry name" value="Guanylate_kinase"/>
    <property type="match status" value="1"/>
</dbReference>
<dbReference type="InterPro" id="IPR008145">
    <property type="entry name" value="GK/Ca_channel_bsu"/>
</dbReference>
<dbReference type="InterPro" id="IPR008144">
    <property type="entry name" value="Guanylate_kin-like_dom"/>
</dbReference>
<dbReference type="InterPro" id="IPR017665">
    <property type="entry name" value="Guanylate_kinase"/>
</dbReference>
<dbReference type="InterPro" id="IPR020590">
    <property type="entry name" value="Guanylate_kinase_CS"/>
</dbReference>
<dbReference type="InterPro" id="IPR027417">
    <property type="entry name" value="P-loop_NTPase"/>
</dbReference>
<dbReference type="NCBIfam" id="TIGR03263">
    <property type="entry name" value="guanyl_kin"/>
    <property type="match status" value="1"/>
</dbReference>
<dbReference type="PANTHER" id="PTHR23117:SF13">
    <property type="entry name" value="GUANYLATE KINASE"/>
    <property type="match status" value="1"/>
</dbReference>
<dbReference type="PANTHER" id="PTHR23117">
    <property type="entry name" value="GUANYLATE KINASE-RELATED"/>
    <property type="match status" value="1"/>
</dbReference>
<dbReference type="Pfam" id="PF00625">
    <property type="entry name" value="Guanylate_kin"/>
    <property type="match status" value="1"/>
</dbReference>
<dbReference type="SMART" id="SM00072">
    <property type="entry name" value="GuKc"/>
    <property type="match status" value="1"/>
</dbReference>
<dbReference type="SUPFAM" id="SSF52540">
    <property type="entry name" value="P-loop containing nucleoside triphosphate hydrolases"/>
    <property type="match status" value="1"/>
</dbReference>
<dbReference type="PROSITE" id="PS00856">
    <property type="entry name" value="GUANYLATE_KINASE_1"/>
    <property type="match status" value="1"/>
</dbReference>
<dbReference type="PROSITE" id="PS50052">
    <property type="entry name" value="GUANYLATE_KINASE_2"/>
    <property type="match status" value="1"/>
</dbReference>
<keyword id="KW-0067">ATP-binding</keyword>
<keyword id="KW-0963">Cytoplasm</keyword>
<keyword id="KW-0418">Kinase</keyword>
<keyword id="KW-0547">Nucleotide-binding</keyword>
<keyword id="KW-0808">Transferase</keyword>